<organism>
    <name type="scientific">Parafrankia sp. (strain EAN1pec)</name>
    <dbReference type="NCBI Taxonomy" id="298653"/>
    <lineage>
        <taxon>Bacteria</taxon>
        <taxon>Bacillati</taxon>
        <taxon>Actinomycetota</taxon>
        <taxon>Actinomycetes</taxon>
        <taxon>Frankiales</taxon>
        <taxon>Frankiaceae</taxon>
        <taxon>Parafrankia</taxon>
    </lineage>
</organism>
<feature type="chain" id="PRO_1000126917" description="Large ribosomal subunit protein bL9">
    <location>
        <begin position="1"/>
        <end position="148"/>
    </location>
</feature>
<dbReference type="EMBL" id="CP000820">
    <property type="protein sequence ID" value="ABW16628.1"/>
    <property type="molecule type" value="Genomic_DNA"/>
</dbReference>
<dbReference type="RefSeq" id="WP_020464683.1">
    <property type="nucleotide sequence ID" value="NC_009921.1"/>
</dbReference>
<dbReference type="SMR" id="A8L8T1"/>
<dbReference type="STRING" id="298653.Franean1_7309"/>
<dbReference type="KEGG" id="fre:Franean1_7309"/>
<dbReference type="eggNOG" id="COG0359">
    <property type="taxonomic scope" value="Bacteria"/>
</dbReference>
<dbReference type="HOGENOM" id="CLU_078938_5_1_11"/>
<dbReference type="GO" id="GO:1990904">
    <property type="term" value="C:ribonucleoprotein complex"/>
    <property type="evidence" value="ECO:0007669"/>
    <property type="project" value="UniProtKB-KW"/>
</dbReference>
<dbReference type="GO" id="GO:0005840">
    <property type="term" value="C:ribosome"/>
    <property type="evidence" value="ECO:0007669"/>
    <property type="project" value="UniProtKB-KW"/>
</dbReference>
<dbReference type="GO" id="GO:0019843">
    <property type="term" value="F:rRNA binding"/>
    <property type="evidence" value="ECO:0007669"/>
    <property type="project" value="UniProtKB-UniRule"/>
</dbReference>
<dbReference type="GO" id="GO:0003735">
    <property type="term" value="F:structural constituent of ribosome"/>
    <property type="evidence" value="ECO:0007669"/>
    <property type="project" value="InterPro"/>
</dbReference>
<dbReference type="GO" id="GO:0006412">
    <property type="term" value="P:translation"/>
    <property type="evidence" value="ECO:0007669"/>
    <property type="project" value="UniProtKB-UniRule"/>
</dbReference>
<dbReference type="FunFam" id="3.40.5.10:FF:000003">
    <property type="entry name" value="50S ribosomal protein L9"/>
    <property type="match status" value="1"/>
</dbReference>
<dbReference type="Gene3D" id="3.10.430.100">
    <property type="entry name" value="Ribosomal protein L9, C-terminal domain"/>
    <property type="match status" value="1"/>
</dbReference>
<dbReference type="Gene3D" id="3.40.5.10">
    <property type="entry name" value="Ribosomal protein L9, N-terminal domain"/>
    <property type="match status" value="1"/>
</dbReference>
<dbReference type="HAMAP" id="MF_00503">
    <property type="entry name" value="Ribosomal_bL9"/>
    <property type="match status" value="1"/>
</dbReference>
<dbReference type="InterPro" id="IPR000244">
    <property type="entry name" value="Ribosomal_bL9"/>
</dbReference>
<dbReference type="InterPro" id="IPR009027">
    <property type="entry name" value="Ribosomal_bL9/RNase_H1_N"/>
</dbReference>
<dbReference type="InterPro" id="IPR020594">
    <property type="entry name" value="Ribosomal_bL9_bac/chp"/>
</dbReference>
<dbReference type="InterPro" id="IPR020069">
    <property type="entry name" value="Ribosomal_bL9_C"/>
</dbReference>
<dbReference type="InterPro" id="IPR036791">
    <property type="entry name" value="Ribosomal_bL9_C_sf"/>
</dbReference>
<dbReference type="InterPro" id="IPR020070">
    <property type="entry name" value="Ribosomal_bL9_N"/>
</dbReference>
<dbReference type="InterPro" id="IPR036935">
    <property type="entry name" value="Ribosomal_bL9_N_sf"/>
</dbReference>
<dbReference type="NCBIfam" id="TIGR00158">
    <property type="entry name" value="L9"/>
    <property type="match status" value="1"/>
</dbReference>
<dbReference type="PANTHER" id="PTHR21368">
    <property type="entry name" value="50S RIBOSOMAL PROTEIN L9"/>
    <property type="match status" value="1"/>
</dbReference>
<dbReference type="Pfam" id="PF03948">
    <property type="entry name" value="Ribosomal_L9_C"/>
    <property type="match status" value="1"/>
</dbReference>
<dbReference type="Pfam" id="PF01281">
    <property type="entry name" value="Ribosomal_L9_N"/>
    <property type="match status" value="1"/>
</dbReference>
<dbReference type="SUPFAM" id="SSF55658">
    <property type="entry name" value="L9 N-domain-like"/>
    <property type="match status" value="1"/>
</dbReference>
<dbReference type="SUPFAM" id="SSF55653">
    <property type="entry name" value="Ribosomal protein L9 C-domain"/>
    <property type="match status" value="1"/>
</dbReference>
<dbReference type="PROSITE" id="PS00651">
    <property type="entry name" value="RIBOSOMAL_L9"/>
    <property type="match status" value="1"/>
</dbReference>
<sequence length="148" mass="15657">MKLVLTQEVPGLGSPGDIVDVADGYGRNYLVPRRYAILATRGAERQVAQIKRARDARAVRDLDHAKEIAGQLSGLSVRLVSRAGKEGRLFGSVTAADVVSAVTDAGGPALDRRRVELSTPIKSLGSHTVAVHLHPEVSAKLTVQVTSA</sequence>
<gene>
    <name evidence="1" type="primary">rplI</name>
    <name type="ordered locus">Franean1_7309</name>
</gene>
<name>RL9_PARS2</name>
<protein>
    <recommendedName>
        <fullName evidence="1">Large ribosomal subunit protein bL9</fullName>
    </recommendedName>
    <alternativeName>
        <fullName evidence="2">50S ribosomal protein L9</fullName>
    </alternativeName>
</protein>
<evidence type="ECO:0000255" key="1">
    <source>
        <dbReference type="HAMAP-Rule" id="MF_00503"/>
    </source>
</evidence>
<evidence type="ECO:0000305" key="2"/>
<accession>A8L8T1</accession>
<reference key="1">
    <citation type="journal article" date="2007" name="Genome Res.">
        <title>Genome characteristics of facultatively symbiotic Frankia sp. strains reflect host range and host plant biogeography.</title>
        <authorList>
            <person name="Normand P."/>
            <person name="Lapierre P."/>
            <person name="Tisa L.S."/>
            <person name="Gogarten J.P."/>
            <person name="Alloisio N."/>
            <person name="Bagnarol E."/>
            <person name="Bassi C.A."/>
            <person name="Berry A.M."/>
            <person name="Bickhart D.M."/>
            <person name="Choisne N."/>
            <person name="Couloux A."/>
            <person name="Cournoyer B."/>
            <person name="Cruveiller S."/>
            <person name="Daubin V."/>
            <person name="Demange N."/>
            <person name="Francino M.P."/>
            <person name="Goltsman E."/>
            <person name="Huang Y."/>
            <person name="Kopp O.R."/>
            <person name="Labarre L."/>
            <person name="Lapidus A."/>
            <person name="Lavire C."/>
            <person name="Marechal J."/>
            <person name="Martinez M."/>
            <person name="Mastronunzio J.E."/>
            <person name="Mullin B.C."/>
            <person name="Niemann J."/>
            <person name="Pujic P."/>
            <person name="Rawnsley T."/>
            <person name="Rouy Z."/>
            <person name="Schenowitz C."/>
            <person name="Sellstedt A."/>
            <person name="Tavares F."/>
            <person name="Tomkins J.P."/>
            <person name="Vallenet D."/>
            <person name="Valverde C."/>
            <person name="Wall L.G."/>
            <person name="Wang Y."/>
            <person name="Medigue C."/>
            <person name="Benson D.R."/>
        </authorList>
    </citation>
    <scope>NUCLEOTIDE SEQUENCE [LARGE SCALE GENOMIC DNA]</scope>
    <source>
        <strain>EAN1pec</strain>
    </source>
</reference>
<proteinExistence type="inferred from homology"/>
<comment type="function">
    <text evidence="1">Binds to the 23S rRNA.</text>
</comment>
<comment type="similarity">
    <text evidence="1">Belongs to the bacterial ribosomal protein bL9 family.</text>
</comment>
<keyword id="KW-0687">Ribonucleoprotein</keyword>
<keyword id="KW-0689">Ribosomal protein</keyword>
<keyword id="KW-0694">RNA-binding</keyword>
<keyword id="KW-0699">rRNA-binding</keyword>